<keyword id="KW-0349">Heme</keyword>
<keyword id="KW-0376">Hydrogen peroxide</keyword>
<keyword id="KW-0408">Iron</keyword>
<keyword id="KW-0479">Metal-binding</keyword>
<keyword id="KW-0560">Oxidoreductase</keyword>
<keyword id="KW-0575">Peroxidase</keyword>
<gene>
    <name evidence="1" type="primary">katG</name>
    <name type="ORF">SAMR0623</name>
</gene>
<comment type="function">
    <text evidence="1">Bifunctional enzyme with both catalase and broad-spectrum peroxidase activity.</text>
</comment>
<comment type="catalytic activity">
    <reaction evidence="1">
        <text>H2O2 + AH2 = A + 2 H2O</text>
        <dbReference type="Rhea" id="RHEA:30275"/>
        <dbReference type="ChEBI" id="CHEBI:13193"/>
        <dbReference type="ChEBI" id="CHEBI:15377"/>
        <dbReference type="ChEBI" id="CHEBI:16240"/>
        <dbReference type="ChEBI" id="CHEBI:17499"/>
        <dbReference type="EC" id="1.11.1.21"/>
    </reaction>
</comment>
<comment type="catalytic activity">
    <reaction evidence="1">
        <text>2 H2O2 = O2 + 2 H2O</text>
        <dbReference type="Rhea" id="RHEA:20309"/>
        <dbReference type="ChEBI" id="CHEBI:15377"/>
        <dbReference type="ChEBI" id="CHEBI:15379"/>
        <dbReference type="ChEBI" id="CHEBI:16240"/>
        <dbReference type="EC" id="1.11.1.21"/>
    </reaction>
</comment>
<comment type="cofactor">
    <cofactor evidence="1">
        <name>heme b</name>
        <dbReference type="ChEBI" id="CHEBI:60344"/>
    </cofactor>
    <text evidence="1">Binds 1 heme b (iron(II)-protoporphyrin IX) group per dimer.</text>
</comment>
<comment type="subunit">
    <text evidence="1">Homodimer or homotetramer.</text>
</comment>
<comment type="PTM">
    <text evidence="1">Formation of the three residue Trp-Tyr-Met cross-link is important for the catalase, but not the peroxidase activity of the enzyme.</text>
</comment>
<comment type="similarity">
    <text evidence="1">Belongs to the peroxidase family. Peroxidase/catalase subfamily.</text>
</comment>
<protein>
    <recommendedName>
        <fullName evidence="1">Catalase-peroxidase</fullName>
        <shortName evidence="1">CP</shortName>
        <ecNumber evidence="1">1.11.1.21</ecNumber>
    </recommendedName>
    <alternativeName>
        <fullName evidence="1">Peroxidase/catalase</fullName>
    </alternativeName>
</protein>
<accession>A0ACX8</accession>
<dbReference type="EC" id="1.11.1.21" evidence="1"/>
<dbReference type="EMBL" id="AM238664">
    <property type="protein sequence ID" value="CAJ88333.1"/>
    <property type="molecule type" value="Genomic_DNA"/>
</dbReference>
<dbReference type="RefSeq" id="WP_053141208.1">
    <property type="nucleotide sequence ID" value="NZ_CP012949.1"/>
</dbReference>
<dbReference type="SMR" id="A0ACX8"/>
<dbReference type="PATRIC" id="fig|1889.10.peg.6676"/>
<dbReference type="OMA" id="GPETTWL"/>
<dbReference type="OrthoDB" id="9759743at2"/>
<dbReference type="GO" id="GO:0005829">
    <property type="term" value="C:cytosol"/>
    <property type="evidence" value="ECO:0007669"/>
    <property type="project" value="TreeGrafter"/>
</dbReference>
<dbReference type="GO" id="GO:0004096">
    <property type="term" value="F:catalase activity"/>
    <property type="evidence" value="ECO:0007669"/>
    <property type="project" value="UniProtKB-UniRule"/>
</dbReference>
<dbReference type="GO" id="GO:0020037">
    <property type="term" value="F:heme binding"/>
    <property type="evidence" value="ECO:0007669"/>
    <property type="project" value="InterPro"/>
</dbReference>
<dbReference type="GO" id="GO:0046872">
    <property type="term" value="F:metal ion binding"/>
    <property type="evidence" value="ECO:0007669"/>
    <property type="project" value="UniProtKB-KW"/>
</dbReference>
<dbReference type="GO" id="GO:0070301">
    <property type="term" value="P:cellular response to hydrogen peroxide"/>
    <property type="evidence" value="ECO:0007669"/>
    <property type="project" value="TreeGrafter"/>
</dbReference>
<dbReference type="GO" id="GO:0042744">
    <property type="term" value="P:hydrogen peroxide catabolic process"/>
    <property type="evidence" value="ECO:0007669"/>
    <property type="project" value="UniProtKB-KW"/>
</dbReference>
<dbReference type="CDD" id="cd00649">
    <property type="entry name" value="catalase_peroxidase_1"/>
    <property type="match status" value="1"/>
</dbReference>
<dbReference type="CDD" id="cd08200">
    <property type="entry name" value="catalase_peroxidase_2"/>
    <property type="match status" value="1"/>
</dbReference>
<dbReference type="FunFam" id="1.10.420.10:FF:000002">
    <property type="entry name" value="Catalase-peroxidase"/>
    <property type="match status" value="1"/>
</dbReference>
<dbReference type="FunFam" id="1.10.420.10:FF:000004">
    <property type="entry name" value="Catalase-peroxidase"/>
    <property type="match status" value="1"/>
</dbReference>
<dbReference type="FunFam" id="1.10.520.10:FF:000002">
    <property type="entry name" value="Catalase-peroxidase"/>
    <property type="match status" value="1"/>
</dbReference>
<dbReference type="Gene3D" id="1.10.520.10">
    <property type="match status" value="2"/>
</dbReference>
<dbReference type="Gene3D" id="1.10.420.10">
    <property type="entry name" value="Peroxidase, domain 2"/>
    <property type="match status" value="2"/>
</dbReference>
<dbReference type="HAMAP" id="MF_01961">
    <property type="entry name" value="Catal_peroxid"/>
    <property type="match status" value="1"/>
</dbReference>
<dbReference type="InterPro" id="IPR000763">
    <property type="entry name" value="Catalase_peroxidase"/>
</dbReference>
<dbReference type="InterPro" id="IPR002016">
    <property type="entry name" value="Haem_peroxidase"/>
</dbReference>
<dbReference type="InterPro" id="IPR010255">
    <property type="entry name" value="Haem_peroxidase_sf"/>
</dbReference>
<dbReference type="InterPro" id="IPR019794">
    <property type="entry name" value="Peroxidases_AS"/>
</dbReference>
<dbReference type="InterPro" id="IPR019793">
    <property type="entry name" value="Peroxidases_heam-ligand_BS"/>
</dbReference>
<dbReference type="NCBIfam" id="TIGR00198">
    <property type="entry name" value="cat_per_HPI"/>
    <property type="match status" value="1"/>
</dbReference>
<dbReference type="NCBIfam" id="NF011635">
    <property type="entry name" value="PRK15061.1"/>
    <property type="match status" value="1"/>
</dbReference>
<dbReference type="PANTHER" id="PTHR30555:SF0">
    <property type="entry name" value="CATALASE-PEROXIDASE"/>
    <property type="match status" value="1"/>
</dbReference>
<dbReference type="PANTHER" id="PTHR30555">
    <property type="entry name" value="HYDROPEROXIDASE I, BIFUNCTIONAL CATALASE-PEROXIDASE"/>
    <property type="match status" value="1"/>
</dbReference>
<dbReference type="Pfam" id="PF00141">
    <property type="entry name" value="peroxidase"/>
    <property type="match status" value="2"/>
</dbReference>
<dbReference type="PRINTS" id="PR00460">
    <property type="entry name" value="BPEROXIDASE"/>
</dbReference>
<dbReference type="PRINTS" id="PR00458">
    <property type="entry name" value="PEROXIDASE"/>
</dbReference>
<dbReference type="SUPFAM" id="SSF48113">
    <property type="entry name" value="Heme-dependent peroxidases"/>
    <property type="match status" value="2"/>
</dbReference>
<dbReference type="PROSITE" id="PS00435">
    <property type="entry name" value="PEROXIDASE_1"/>
    <property type="match status" value="1"/>
</dbReference>
<dbReference type="PROSITE" id="PS00436">
    <property type="entry name" value="PEROXIDASE_2"/>
    <property type="match status" value="1"/>
</dbReference>
<dbReference type="PROSITE" id="PS50873">
    <property type="entry name" value="PEROXIDASE_4"/>
    <property type="match status" value="1"/>
</dbReference>
<feature type="chain" id="PRO_0000354938" description="Catalase-peroxidase">
    <location>
        <begin position="1"/>
        <end position="738"/>
    </location>
</feature>
<feature type="region of interest" description="Disordered" evidence="2">
    <location>
        <begin position="1"/>
        <end position="37"/>
    </location>
</feature>
<feature type="compositionally biased region" description="Basic and acidic residues" evidence="2">
    <location>
        <begin position="1"/>
        <end position="16"/>
    </location>
</feature>
<feature type="active site" description="Proton acceptor" evidence="1">
    <location>
        <position position="109"/>
    </location>
</feature>
<feature type="binding site" description="axial binding residue" evidence="1">
    <location>
        <position position="272"/>
    </location>
    <ligand>
        <name>heme b</name>
        <dbReference type="ChEBI" id="CHEBI:60344"/>
    </ligand>
    <ligandPart>
        <name>Fe</name>
        <dbReference type="ChEBI" id="CHEBI:18248"/>
    </ligandPart>
</feature>
<feature type="site" description="Transition state stabilizer" evidence="1">
    <location>
        <position position="105"/>
    </location>
</feature>
<feature type="cross-link" description="Tryptophyl-tyrosyl-methioninium (Trp-Tyr) (with M-257)" evidence="1">
    <location>
        <begin position="108"/>
        <end position="231"/>
    </location>
</feature>
<feature type="cross-link" description="Tryptophyl-tyrosyl-methioninium (Tyr-Met) (with W-108)" evidence="1">
    <location>
        <begin position="231"/>
        <end position="257"/>
    </location>
</feature>
<proteinExistence type="inferred from homology"/>
<sequence>MSENHDAIVTDAKTEEAGGCPVAHGRAPHPTQGGGNRQWWPERLNLKILAKNPAVANPLGDGFDYAEAFGSLDLPAVKRDIAEVLTTSQDWWPADFGHYGPLMIRMAWHSAGTYRISDGRGGAGAGQQRFAPLNSWPDNGNLDKARRLLWPVKKKYGQSLSWADLLILTGNVALEQMGFETFGFAGGRADVWEAEEDVYWGPETTWLDDRRYSGDRELENPLGAVQMGLIYVNPEGPNGNPDPIAAARDIRETFGRMAMNDEETVALIAGGHTFGKTHGAGPADHVGDDPEAASMEEQGLGWRNSFGTGKGGDAITSGLEVTWTSTPTRWSNGFFKNLFEFEYELEQSPAGANQWVAKDAPEIVPDAHDPSKKHRPKMLTTDLSLRYDPIYEPISRRFYENPEEFADAFARAWYKLTHRDMGPKSLYLGPEVPEETLLWQDPLPEADGEPVDAEDVATLKTKLLESGLSVSQLVSTAWASASTFRGSDKRGGANGARIRLEPQRGWEVNEPDELAQVLRVLEGIQQEFNSGTKKVSLADLIVLGGTAAVEKAAKEAGFQVQVPFTAGRVDATEEHTDAESFEALEPVADGFRNYLGKGNRLPAEYLLLDRANLLTLSAPEMTVLVGGLRVLGANYQKSPLGAFTRTPGSLTNDFFVNLLDLGVTWKSTSEDQTTFEGRDAATGEVKWAGSRADLVFGSNSELRALAEVYASDDAKEKFVHDFVDAWVKVMNLDRFDLV</sequence>
<name>KATG_STRAM</name>
<reference key="1">
    <citation type="journal article" date="2006" name="Mol. Biol. Evol.">
        <title>Evolution of the terminal regions of the Streptomyces linear chromosome.</title>
        <authorList>
            <person name="Choulet F."/>
            <person name="Aigle B."/>
            <person name="Gallois A."/>
            <person name="Mangenot S."/>
            <person name="Gerbaud C."/>
            <person name="Truong C."/>
            <person name="Francou F.-X."/>
            <person name="Fourrier C."/>
            <person name="Guerineau M."/>
            <person name="Decaris B."/>
            <person name="Barbe V."/>
            <person name="Pernodet J.-L."/>
            <person name="Leblond P."/>
        </authorList>
    </citation>
    <scope>NUCLEOTIDE SEQUENCE [LARGE SCALE GENOMIC DNA]</scope>
    <source>
        <strain>ATCC 23877 / 3486 / DSM 40053 / JCM 4204 / NBRC 12836 / NRRL B-2516</strain>
    </source>
</reference>
<organism>
    <name type="scientific">Streptomyces ambofaciens</name>
    <dbReference type="NCBI Taxonomy" id="1889"/>
    <lineage>
        <taxon>Bacteria</taxon>
        <taxon>Bacillati</taxon>
        <taxon>Actinomycetota</taxon>
        <taxon>Actinomycetes</taxon>
        <taxon>Kitasatosporales</taxon>
        <taxon>Streptomycetaceae</taxon>
        <taxon>Streptomyces</taxon>
    </lineage>
</organism>
<evidence type="ECO:0000255" key="1">
    <source>
        <dbReference type="HAMAP-Rule" id="MF_01961"/>
    </source>
</evidence>
<evidence type="ECO:0000256" key="2">
    <source>
        <dbReference type="SAM" id="MobiDB-lite"/>
    </source>
</evidence>